<proteinExistence type="inferred from homology"/>
<protein>
    <recommendedName>
        <fullName evidence="1">Large ribosomal subunit protein bL19</fullName>
    </recommendedName>
    <alternativeName>
        <fullName evidence="2">50S ribosomal protein L19</fullName>
    </alternativeName>
</protein>
<organism>
    <name type="scientific">Chloroherpeton thalassium (strain ATCC 35110 / GB-78)</name>
    <dbReference type="NCBI Taxonomy" id="517418"/>
    <lineage>
        <taxon>Bacteria</taxon>
        <taxon>Pseudomonadati</taxon>
        <taxon>Chlorobiota</taxon>
        <taxon>Chlorobiia</taxon>
        <taxon>Chlorobiales</taxon>
        <taxon>Chloroherpetonaceae</taxon>
        <taxon>Chloroherpeton</taxon>
    </lineage>
</organism>
<reference key="1">
    <citation type="submission" date="2008-06" db="EMBL/GenBank/DDBJ databases">
        <title>Complete sequence of Chloroherpeton thalassium ATCC 35110.</title>
        <authorList>
            <consortium name="US DOE Joint Genome Institute"/>
            <person name="Lucas S."/>
            <person name="Copeland A."/>
            <person name="Lapidus A."/>
            <person name="Glavina del Rio T."/>
            <person name="Dalin E."/>
            <person name="Tice H."/>
            <person name="Bruce D."/>
            <person name="Goodwin L."/>
            <person name="Pitluck S."/>
            <person name="Schmutz J."/>
            <person name="Larimer F."/>
            <person name="Land M."/>
            <person name="Hauser L."/>
            <person name="Kyrpides N."/>
            <person name="Mikhailova N."/>
            <person name="Liu Z."/>
            <person name="Li T."/>
            <person name="Zhao F."/>
            <person name="Overmann J."/>
            <person name="Bryant D.A."/>
            <person name="Richardson P."/>
        </authorList>
    </citation>
    <scope>NUCLEOTIDE SEQUENCE [LARGE SCALE GENOMIC DNA]</scope>
    <source>
        <strain>ATCC 35110 / GB-78</strain>
    </source>
</reference>
<evidence type="ECO:0000255" key="1">
    <source>
        <dbReference type="HAMAP-Rule" id="MF_00402"/>
    </source>
</evidence>
<evidence type="ECO:0000305" key="2"/>
<dbReference type="EMBL" id="CP001100">
    <property type="protein sequence ID" value="ACF14910.1"/>
    <property type="molecule type" value="Genomic_DNA"/>
</dbReference>
<dbReference type="RefSeq" id="WP_012500992.1">
    <property type="nucleotide sequence ID" value="NC_011026.1"/>
</dbReference>
<dbReference type="SMR" id="B3QXJ5"/>
<dbReference type="STRING" id="517418.Ctha_2461"/>
<dbReference type="KEGG" id="cts:Ctha_2461"/>
<dbReference type="eggNOG" id="COG0335">
    <property type="taxonomic scope" value="Bacteria"/>
</dbReference>
<dbReference type="HOGENOM" id="CLU_103507_2_2_10"/>
<dbReference type="OrthoDB" id="9803541at2"/>
<dbReference type="Proteomes" id="UP000001208">
    <property type="component" value="Chromosome"/>
</dbReference>
<dbReference type="GO" id="GO:0022625">
    <property type="term" value="C:cytosolic large ribosomal subunit"/>
    <property type="evidence" value="ECO:0007669"/>
    <property type="project" value="TreeGrafter"/>
</dbReference>
<dbReference type="GO" id="GO:0003735">
    <property type="term" value="F:structural constituent of ribosome"/>
    <property type="evidence" value="ECO:0007669"/>
    <property type="project" value="InterPro"/>
</dbReference>
<dbReference type="GO" id="GO:0006412">
    <property type="term" value="P:translation"/>
    <property type="evidence" value="ECO:0007669"/>
    <property type="project" value="UniProtKB-UniRule"/>
</dbReference>
<dbReference type="FunFam" id="2.30.30.790:FF:000001">
    <property type="entry name" value="50S ribosomal protein L19"/>
    <property type="match status" value="1"/>
</dbReference>
<dbReference type="Gene3D" id="2.30.30.790">
    <property type="match status" value="1"/>
</dbReference>
<dbReference type="HAMAP" id="MF_00402">
    <property type="entry name" value="Ribosomal_bL19"/>
    <property type="match status" value="1"/>
</dbReference>
<dbReference type="InterPro" id="IPR001857">
    <property type="entry name" value="Ribosomal_bL19"/>
</dbReference>
<dbReference type="InterPro" id="IPR018257">
    <property type="entry name" value="Ribosomal_bL19_CS"/>
</dbReference>
<dbReference type="InterPro" id="IPR038657">
    <property type="entry name" value="Ribosomal_bL19_sf"/>
</dbReference>
<dbReference type="InterPro" id="IPR008991">
    <property type="entry name" value="Translation_prot_SH3-like_sf"/>
</dbReference>
<dbReference type="NCBIfam" id="TIGR01024">
    <property type="entry name" value="rplS_bact"/>
    <property type="match status" value="1"/>
</dbReference>
<dbReference type="PANTHER" id="PTHR15680:SF9">
    <property type="entry name" value="LARGE RIBOSOMAL SUBUNIT PROTEIN BL19M"/>
    <property type="match status" value="1"/>
</dbReference>
<dbReference type="PANTHER" id="PTHR15680">
    <property type="entry name" value="RIBOSOMAL PROTEIN L19"/>
    <property type="match status" value="1"/>
</dbReference>
<dbReference type="Pfam" id="PF01245">
    <property type="entry name" value="Ribosomal_L19"/>
    <property type="match status" value="1"/>
</dbReference>
<dbReference type="PIRSF" id="PIRSF002191">
    <property type="entry name" value="Ribosomal_L19"/>
    <property type="match status" value="1"/>
</dbReference>
<dbReference type="PRINTS" id="PR00061">
    <property type="entry name" value="RIBOSOMALL19"/>
</dbReference>
<dbReference type="SUPFAM" id="SSF50104">
    <property type="entry name" value="Translation proteins SH3-like domain"/>
    <property type="match status" value="1"/>
</dbReference>
<dbReference type="PROSITE" id="PS01015">
    <property type="entry name" value="RIBOSOMAL_L19"/>
    <property type="match status" value="1"/>
</dbReference>
<comment type="function">
    <text evidence="1">This protein is located at the 30S-50S ribosomal subunit interface and may play a role in the structure and function of the aminoacyl-tRNA binding site.</text>
</comment>
<comment type="similarity">
    <text evidence="1">Belongs to the bacterial ribosomal protein bL19 family.</text>
</comment>
<feature type="chain" id="PRO_1000193809" description="Large ribosomal subunit protein bL19">
    <location>
        <begin position="1"/>
        <end position="121"/>
    </location>
</feature>
<sequence length="121" mass="13666">MNEKIKLVEAAQMRADIPEIHPGDTLKVHVKVVEGDKERLQLFQGILISIRGVGMSKTITVRKISHGVGVERIIPLHSPIIEKIEVVKRGKVRRAKLFYMRNRTGKAAMKIKEKTTNSEMA</sequence>
<name>RL19_CHLT3</name>
<gene>
    <name evidence="1" type="primary">rplS</name>
    <name type="ordered locus">Ctha_2461</name>
</gene>
<accession>B3QXJ5</accession>
<keyword id="KW-1185">Reference proteome</keyword>
<keyword id="KW-0687">Ribonucleoprotein</keyword>
<keyword id="KW-0689">Ribosomal protein</keyword>